<proteinExistence type="evidence at protein level"/>
<evidence type="ECO:0000250" key="1">
    <source>
        <dbReference type="UniProtKB" id="P37610"/>
    </source>
</evidence>
<evidence type="ECO:0000269" key="2">
    <source>
    </source>
</evidence>
<evidence type="ECO:0000303" key="3">
    <source>
    </source>
</evidence>
<evidence type="ECO:0000305" key="4"/>
<sequence length="275" mass="30271">MQQLQADFRDPRCVSPVDFADHDAPSQIVGNVEEHGFALVDMADAGPPDARIAALSTALRLGEPYIPALYRYGETKDYSAPYSDIRSEPTDRHPGFSTTAGQIWHVDGLLDDIGEIKTTILYCVRAAHRGGDTMLFNSLAAFAELREKDQDAAEALLSPAALNRRSTIPGIDVNATGPVFSVDDNGDLVTRYTDNETCTWDYSAGPPGGLRRALDFLRTATDDPRYRLAVRLAPGQALVFRNDRLSHGRQPYEDKPDARRHLVRALYAEAPRASN</sequence>
<keyword id="KW-0045">Antibiotic biosynthesis</keyword>
<keyword id="KW-0223">Dioxygenase</keyword>
<keyword id="KW-0408">Iron</keyword>
<keyword id="KW-0479">Metal-binding</keyword>
<keyword id="KW-0560">Oxidoreductase</keyword>
<name>UMPDO_AMYSP</name>
<feature type="chain" id="PRO_0000459720" description="Uridine-5'-phosphate dioxygenase">
    <location>
        <begin position="1"/>
        <end position="275"/>
    </location>
</feature>
<feature type="binding site" evidence="1">
    <location>
        <position position="105"/>
    </location>
    <ligand>
        <name>Fe cation</name>
        <dbReference type="ChEBI" id="CHEBI:24875"/>
        <note>catalytic</note>
    </ligand>
</feature>
<feature type="binding site" evidence="1">
    <location>
        <position position="107"/>
    </location>
    <ligand>
        <name>Fe cation</name>
        <dbReference type="ChEBI" id="CHEBI:24875"/>
        <note>catalytic</note>
    </ligand>
</feature>
<feature type="binding site" evidence="1">
    <location>
        <position position="247"/>
    </location>
    <ligand>
        <name>Fe cation</name>
        <dbReference type="ChEBI" id="CHEBI:24875"/>
        <note>catalytic</note>
    </ligand>
</feature>
<dbReference type="EC" id="1.14.11.49" evidence="2"/>
<dbReference type="EMBL" id="KP995196">
    <property type="protein sequence ID" value="AKC92631.1"/>
    <property type="molecule type" value="Genomic_DNA"/>
</dbReference>
<dbReference type="SMR" id="A0A0E3USC3"/>
<dbReference type="GO" id="GO:0051213">
    <property type="term" value="F:dioxygenase activity"/>
    <property type="evidence" value="ECO:0007669"/>
    <property type="project" value="UniProtKB-KW"/>
</dbReference>
<dbReference type="GO" id="GO:0046872">
    <property type="term" value="F:metal ion binding"/>
    <property type="evidence" value="ECO:0007669"/>
    <property type="project" value="UniProtKB-KW"/>
</dbReference>
<dbReference type="GO" id="GO:0017000">
    <property type="term" value="P:antibiotic biosynthetic process"/>
    <property type="evidence" value="ECO:0007669"/>
    <property type="project" value="UniProtKB-KW"/>
</dbReference>
<dbReference type="Gene3D" id="3.60.130.10">
    <property type="entry name" value="Clavaminate synthase-like"/>
    <property type="match status" value="1"/>
</dbReference>
<dbReference type="InterPro" id="IPR050411">
    <property type="entry name" value="AlphaKG_dependent_hydroxylases"/>
</dbReference>
<dbReference type="InterPro" id="IPR042098">
    <property type="entry name" value="TauD-like_sf"/>
</dbReference>
<dbReference type="InterPro" id="IPR003819">
    <property type="entry name" value="TauD/TfdA-like"/>
</dbReference>
<dbReference type="PANTHER" id="PTHR10696">
    <property type="entry name" value="GAMMA-BUTYROBETAINE HYDROXYLASE-RELATED"/>
    <property type="match status" value="1"/>
</dbReference>
<dbReference type="PANTHER" id="PTHR10696:SF56">
    <property type="entry name" value="TAUD_TFDA-LIKE DOMAIN-CONTAINING PROTEIN"/>
    <property type="match status" value="1"/>
</dbReference>
<dbReference type="Pfam" id="PF02668">
    <property type="entry name" value="TauD"/>
    <property type="match status" value="1"/>
</dbReference>
<dbReference type="SUPFAM" id="SSF51197">
    <property type="entry name" value="Clavaminate synthase-like"/>
    <property type="match status" value="1"/>
</dbReference>
<reference key="1">
    <citation type="journal article" date="2015" name="J. Biol. Chem.">
        <title>The biosynthesis of capuramycin-type antibiotics: identification of the A-102395 biosynthetic gene cluster, mechanism of self-resistance, and formation of uridine-5'-carboxamide.</title>
        <authorList>
            <person name="Cai W."/>
            <person name="Goswami A."/>
            <person name="Yang Z."/>
            <person name="Liu X."/>
            <person name="Green K.D."/>
            <person name="Barnard-Britson S."/>
            <person name="Baba S."/>
            <person name="Funabashi M."/>
            <person name="Nonaka K."/>
            <person name="Sunkara M."/>
            <person name="Morris A.J."/>
            <person name="Spork A.P."/>
            <person name="Ducho C."/>
            <person name="Garneau-Tsodikova S."/>
            <person name="Thorson J.S."/>
            <person name="Van Lanen S.G."/>
        </authorList>
    </citation>
    <scope>NUCLEOTIDE SEQUENCE [GENOMIC DNA]</scope>
    <scope>FUNCTION</scope>
    <scope>CATALYTIC ACTIVITY</scope>
    <scope>COFACTOR</scope>
    <scope>ACTIVITY REGULATION</scope>
    <scope>BIOPHYSICOCHEMICAL PROPERTIES</scope>
    <scope>PATHWAY</scope>
    <scope>DISRUPTION PHENOTYPE</scope>
    <source>
        <strain>SANK 60206</strain>
    </source>
</reference>
<comment type="function">
    <text evidence="2">Dioxygenase involved in the biosynthesis of the capuramycin-type nucleoside antibiotic A-102395 (PubMed:25855790). Catalyzes the dephosphorylation and oxidation of UMP to generate uridine-5'-aldehyde (PubMed:25855790). Can also use the alternative alpha-keto acids pyruvate and alpha-ketoadipate (2-oxoadipate), with very low efficiency (PubMed:25855790). Cannot use alpha-ketobutyrate, alpha-ketovalerate and oxaloacetate (PubMed:25855790).</text>
</comment>
<comment type="catalytic activity">
    <reaction evidence="2">
        <text>UMP + 2-oxoglutarate + O2 = uridine-5'-aldehyde + succinate + phosphate + CO2</text>
        <dbReference type="Rhea" id="RHEA:46500"/>
        <dbReference type="ChEBI" id="CHEBI:15379"/>
        <dbReference type="ChEBI" id="CHEBI:16526"/>
        <dbReference type="ChEBI" id="CHEBI:16810"/>
        <dbReference type="ChEBI" id="CHEBI:30031"/>
        <dbReference type="ChEBI" id="CHEBI:43474"/>
        <dbReference type="ChEBI" id="CHEBI:57865"/>
        <dbReference type="ChEBI" id="CHEBI:86258"/>
        <dbReference type="EC" id="1.14.11.49"/>
    </reaction>
    <physiologicalReaction direction="left-to-right" evidence="2">
        <dbReference type="Rhea" id="RHEA:46501"/>
    </physiologicalReaction>
</comment>
<comment type="cofactor">
    <cofactor evidence="2">
        <name>Fe(2+)</name>
        <dbReference type="ChEBI" id="CHEBI:29033"/>
    </cofactor>
</comment>
<comment type="activity regulation">
    <text evidence="2">Enhanced by ascorbic acid and inhibited by Zn(2+).</text>
</comment>
<comment type="biophysicochemical properties">
    <kinetics>
        <KM evidence="2">25 uM for UMP</KM>
        <KM evidence="2">6.2 uM for 2-oxoglutarate</KM>
        <KM evidence="2">820 uM for pyruvate</KM>
        <KM evidence="2">110 uM for 2-oxoadipate</KM>
        <text evidence="2">kcat is 95 min(-1) with UMP as substrate. kcat is 78 min(-1) with 2-oxoglutarate as substrate. kcat is 9.0 min(-1) with pyruvate as substrate. kcat is 17 min(-1) with 2-oxoadipate as substrate.</text>
    </kinetics>
</comment>
<comment type="pathway">
    <text evidence="2">Antibiotic biosynthesis.</text>
</comment>
<comment type="disruption phenotype">
    <text evidence="2">Inactivation of the gene abolishes A-102395 production.</text>
</comment>
<accession>A0A0E3USC3</accession>
<protein>
    <recommendedName>
        <fullName evidence="4">Uridine-5'-phosphate dioxygenase</fullName>
        <ecNumber evidence="2">1.14.11.49</ecNumber>
    </recommendedName>
    <alternativeName>
        <fullName evidence="3">Fe(II)-dependent alpha-ketoglutarate:uridine-5'-monophosphate dioxygenase</fullName>
        <shortName evidence="3">Fe(II)-dependent alpha-KG:UMP dioxygenase</shortName>
    </alternativeName>
</protein>
<organism>
    <name type="scientific">Amycolatopsis sp</name>
    <dbReference type="NCBI Taxonomy" id="37632"/>
    <lineage>
        <taxon>Bacteria</taxon>
        <taxon>Bacillati</taxon>
        <taxon>Actinomycetota</taxon>
        <taxon>Actinomycetes</taxon>
        <taxon>Pseudonocardiales</taxon>
        <taxon>Pseudonocardiaceae</taxon>
        <taxon>Amycolatopsis</taxon>
    </lineage>
</organism>
<gene>
    <name evidence="3" type="primary">cpr19</name>
</gene>